<keyword id="KW-0066">ATP synthesis</keyword>
<keyword id="KW-1003">Cell membrane</keyword>
<keyword id="KW-0138">CF(0)</keyword>
<keyword id="KW-0375">Hydrogen ion transport</keyword>
<keyword id="KW-0406">Ion transport</keyword>
<keyword id="KW-0472">Membrane</keyword>
<keyword id="KW-0812">Transmembrane</keyword>
<keyword id="KW-1133">Transmembrane helix</keyword>
<keyword id="KW-0813">Transport</keyword>
<reference key="1">
    <citation type="journal article" date="2006" name="Proc. Natl. Acad. Sci. U.S.A.">
        <title>Molecular genetic anatomy of inter- and intraserotype variation in the human bacterial pathogen group A Streptococcus.</title>
        <authorList>
            <person name="Beres S.B."/>
            <person name="Richter E.W."/>
            <person name="Nagiec M.J."/>
            <person name="Sumby P."/>
            <person name="Porcella S.F."/>
            <person name="DeLeo F.R."/>
            <person name="Musser J.M."/>
        </authorList>
    </citation>
    <scope>NUCLEOTIDE SEQUENCE [LARGE SCALE GENOMIC DNA]</scope>
    <source>
        <strain>MGAS10270</strain>
    </source>
</reference>
<accession>Q1JHP0</accession>
<sequence>MEEAKIPMLKLGPITFNLTLLAVCIVTIAVIFAFVFWASRQMKLKPEGKQTALEYLISFVDGIGEEHLDHNLQKSYSLLLFTIFLFVAVANNLGLFTKLETVNGYNLWTSPTANLAFDLALSLFITLMVHIEGVRRRGLVAHLKRLATPWPMTPMNLLEEFTNFLSLAIRLFGNIFAGEVVTGLIVQLANYRVYWWPIAFLVNMAWTAFSVFISCIQAFVFTKLTATYLGKKVNESEE</sequence>
<gene>
    <name evidence="1" type="primary">atpB</name>
    <name type="ordered locus">MGAS10270_Spy0631</name>
</gene>
<protein>
    <recommendedName>
        <fullName evidence="1">ATP synthase subunit a</fullName>
    </recommendedName>
    <alternativeName>
        <fullName evidence="1">ATP synthase F0 sector subunit a</fullName>
    </alternativeName>
    <alternativeName>
        <fullName evidence="1">F-ATPase subunit 6</fullName>
    </alternativeName>
</protein>
<evidence type="ECO:0000255" key="1">
    <source>
        <dbReference type="HAMAP-Rule" id="MF_01393"/>
    </source>
</evidence>
<proteinExistence type="inferred from homology"/>
<name>ATP6_STRPD</name>
<feature type="chain" id="PRO_1000145332" description="ATP synthase subunit a">
    <location>
        <begin position="1"/>
        <end position="238"/>
    </location>
</feature>
<feature type="transmembrane region" description="Helical" evidence="1">
    <location>
        <begin position="18"/>
        <end position="38"/>
    </location>
</feature>
<feature type="transmembrane region" description="Helical" evidence="1">
    <location>
        <begin position="76"/>
        <end position="96"/>
    </location>
</feature>
<feature type="transmembrane region" description="Helical" evidence="1">
    <location>
        <begin position="114"/>
        <end position="134"/>
    </location>
</feature>
<feature type="transmembrane region" description="Helical" evidence="1">
    <location>
        <begin position="166"/>
        <end position="186"/>
    </location>
</feature>
<feature type="transmembrane region" description="Helical" evidence="1">
    <location>
        <begin position="193"/>
        <end position="213"/>
    </location>
</feature>
<comment type="function">
    <text evidence="1">Key component of the proton channel; it plays a direct role in the translocation of protons across the membrane.</text>
</comment>
<comment type="subunit">
    <text evidence="1">F-type ATPases have 2 components, CF(1) - the catalytic core - and CF(0) - the membrane proton channel. CF(1) has five subunits: alpha(3), beta(3), gamma(1), delta(1), epsilon(1). CF(0) has three main subunits: a(1), b(2) and c(9-12). The alpha and beta chains form an alternating ring which encloses part of the gamma chain. CF(1) is attached to CF(0) by a central stalk formed by the gamma and epsilon chains, while a peripheral stalk is formed by the delta and b chains.</text>
</comment>
<comment type="subcellular location">
    <subcellularLocation>
        <location evidence="1">Cell membrane</location>
        <topology evidence="1">Multi-pass membrane protein</topology>
    </subcellularLocation>
</comment>
<comment type="similarity">
    <text evidence="1">Belongs to the ATPase A chain family.</text>
</comment>
<dbReference type="EMBL" id="CP000260">
    <property type="protein sequence ID" value="ABF33696.1"/>
    <property type="molecule type" value="Genomic_DNA"/>
</dbReference>
<dbReference type="RefSeq" id="WP_002985244.1">
    <property type="nucleotide sequence ID" value="NZ_CVUH01000002.1"/>
</dbReference>
<dbReference type="SMR" id="Q1JHP0"/>
<dbReference type="GeneID" id="69901119"/>
<dbReference type="KEGG" id="sph:MGAS10270_Spy0631"/>
<dbReference type="HOGENOM" id="CLU_041018_2_3_9"/>
<dbReference type="Proteomes" id="UP000002436">
    <property type="component" value="Chromosome"/>
</dbReference>
<dbReference type="GO" id="GO:0005886">
    <property type="term" value="C:plasma membrane"/>
    <property type="evidence" value="ECO:0007669"/>
    <property type="project" value="UniProtKB-SubCell"/>
</dbReference>
<dbReference type="GO" id="GO:0045259">
    <property type="term" value="C:proton-transporting ATP synthase complex"/>
    <property type="evidence" value="ECO:0007669"/>
    <property type="project" value="UniProtKB-KW"/>
</dbReference>
<dbReference type="GO" id="GO:0046933">
    <property type="term" value="F:proton-transporting ATP synthase activity, rotational mechanism"/>
    <property type="evidence" value="ECO:0007669"/>
    <property type="project" value="UniProtKB-UniRule"/>
</dbReference>
<dbReference type="GO" id="GO:0042777">
    <property type="term" value="P:proton motive force-driven plasma membrane ATP synthesis"/>
    <property type="evidence" value="ECO:0007669"/>
    <property type="project" value="TreeGrafter"/>
</dbReference>
<dbReference type="CDD" id="cd00310">
    <property type="entry name" value="ATP-synt_Fo_a_6"/>
    <property type="match status" value="1"/>
</dbReference>
<dbReference type="Gene3D" id="1.20.120.220">
    <property type="entry name" value="ATP synthase, F0 complex, subunit A"/>
    <property type="match status" value="1"/>
</dbReference>
<dbReference type="HAMAP" id="MF_01393">
    <property type="entry name" value="ATP_synth_a_bact"/>
    <property type="match status" value="1"/>
</dbReference>
<dbReference type="InterPro" id="IPR045082">
    <property type="entry name" value="ATP_syn_F0_a_bact/chloroplast"/>
</dbReference>
<dbReference type="InterPro" id="IPR000568">
    <property type="entry name" value="ATP_synth_F0_asu"/>
</dbReference>
<dbReference type="InterPro" id="IPR023011">
    <property type="entry name" value="ATP_synth_F0_asu_AS"/>
</dbReference>
<dbReference type="InterPro" id="IPR035908">
    <property type="entry name" value="F0_ATP_A_sf"/>
</dbReference>
<dbReference type="NCBIfam" id="TIGR01131">
    <property type="entry name" value="ATP_synt_6_or_A"/>
    <property type="match status" value="1"/>
</dbReference>
<dbReference type="NCBIfam" id="NF004479">
    <property type="entry name" value="PRK05815.1-4"/>
    <property type="match status" value="1"/>
</dbReference>
<dbReference type="PANTHER" id="PTHR42823">
    <property type="entry name" value="ATP SYNTHASE SUBUNIT A, CHLOROPLASTIC"/>
    <property type="match status" value="1"/>
</dbReference>
<dbReference type="PANTHER" id="PTHR42823:SF3">
    <property type="entry name" value="ATP SYNTHASE SUBUNIT A, CHLOROPLASTIC"/>
    <property type="match status" value="1"/>
</dbReference>
<dbReference type="Pfam" id="PF00119">
    <property type="entry name" value="ATP-synt_A"/>
    <property type="match status" value="1"/>
</dbReference>
<dbReference type="PRINTS" id="PR00123">
    <property type="entry name" value="ATPASEA"/>
</dbReference>
<dbReference type="SUPFAM" id="SSF81336">
    <property type="entry name" value="F1F0 ATP synthase subunit A"/>
    <property type="match status" value="1"/>
</dbReference>
<dbReference type="PROSITE" id="PS00449">
    <property type="entry name" value="ATPASE_A"/>
    <property type="match status" value="1"/>
</dbReference>
<organism>
    <name type="scientific">Streptococcus pyogenes serotype M2 (strain MGAS10270)</name>
    <dbReference type="NCBI Taxonomy" id="370552"/>
    <lineage>
        <taxon>Bacteria</taxon>
        <taxon>Bacillati</taxon>
        <taxon>Bacillota</taxon>
        <taxon>Bacilli</taxon>
        <taxon>Lactobacillales</taxon>
        <taxon>Streptococcaceae</taxon>
        <taxon>Streptococcus</taxon>
    </lineage>
</organism>